<name>RIBB_YERPN</name>
<organism>
    <name type="scientific">Yersinia pestis bv. Antiqua (strain Nepal516)</name>
    <dbReference type="NCBI Taxonomy" id="377628"/>
    <lineage>
        <taxon>Bacteria</taxon>
        <taxon>Pseudomonadati</taxon>
        <taxon>Pseudomonadota</taxon>
        <taxon>Gammaproteobacteria</taxon>
        <taxon>Enterobacterales</taxon>
        <taxon>Yersiniaceae</taxon>
        <taxon>Yersinia</taxon>
    </lineage>
</organism>
<evidence type="ECO:0000255" key="1">
    <source>
        <dbReference type="HAMAP-Rule" id="MF_00180"/>
    </source>
</evidence>
<dbReference type="EC" id="4.1.99.12" evidence="1"/>
<dbReference type="EMBL" id="CP000305">
    <property type="protein sequence ID" value="ABG16849.1"/>
    <property type="molecule type" value="Genomic_DNA"/>
</dbReference>
<dbReference type="EMBL" id="ACNQ01000006">
    <property type="protein sequence ID" value="EEO78308.1"/>
    <property type="molecule type" value="Genomic_DNA"/>
</dbReference>
<dbReference type="RefSeq" id="WP_002212190.1">
    <property type="nucleotide sequence ID" value="NZ_ACNQ01000006.1"/>
</dbReference>
<dbReference type="SMR" id="Q1CMD1"/>
<dbReference type="GeneID" id="57973967"/>
<dbReference type="KEGG" id="ypn:YPN_0517"/>
<dbReference type="HOGENOM" id="CLU_020273_3_0_6"/>
<dbReference type="UniPathway" id="UPA00275">
    <property type="reaction ID" value="UER00399"/>
</dbReference>
<dbReference type="Proteomes" id="UP000008936">
    <property type="component" value="Chromosome"/>
</dbReference>
<dbReference type="GO" id="GO:0005829">
    <property type="term" value="C:cytosol"/>
    <property type="evidence" value="ECO:0007669"/>
    <property type="project" value="TreeGrafter"/>
</dbReference>
<dbReference type="GO" id="GO:0008686">
    <property type="term" value="F:3,4-dihydroxy-2-butanone-4-phosphate synthase activity"/>
    <property type="evidence" value="ECO:0007669"/>
    <property type="project" value="UniProtKB-UniRule"/>
</dbReference>
<dbReference type="GO" id="GO:0000287">
    <property type="term" value="F:magnesium ion binding"/>
    <property type="evidence" value="ECO:0007669"/>
    <property type="project" value="UniProtKB-UniRule"/>
</dbReference>
<dbReference type="GO" id="GO:0030145">
    <property type="term" value="F:manganese ion binding"/>
    <property type="evidence" value="ECO:0007669"/>
    <property type="project" value="UniProtKB-UniRule"/>
</dbReference>
<dbReference type="GO" id="GO:0009231">
    <property type="term" value="P:riboflavin biosynthetic process"/>
    <property type="evidence" value="ECO:0007669"/>
    <property type="project" value="UniProtKB-UniRule"/>
</dbReference>
<dbReference type="FunFam" id="3.90.870.10:FF:000002">
    <property type="entry name" value="3,4-dihydroxy-2-butanone 4-phosphate synthase"/>
    <property type="match status" value="1"/>
</dbReference>
<dbReference type="Gene3D" id="3.90.870.10">
    <property type="entry name" value="DHBP synthase"/>
    <property type="match status" value="1"/>
</dbReference>
<dbReference type="HAMAP" id="MF_00180">
    <property type="entry name" value="RibB"/>
    <property type="match status" value="1"/>
</dbReference>
<dbReference type="InterPro" id="IPR017945">
    <property type="entry name" value="DHBP_synth_RibB-like_a/b_dom"/>
</dbReference>
<dbReference type="InterPro" id="IPR000422">
    <property type="entry name" value="DHBP_synthase_RibB"/>
</dbReference>
<dbReference type="NCBIfam" id="TIGR00506">
    <property type="entry name" value="ribB"/>
    <property type="match status" value="1"/>
</dbReference>
<dbReference type="PANTHER" id="PTHR21327:SF38">
    <property type="entry name" value="3,4-DIHYDROXY-2-BUTANONE 4-PHOSPHATE SYNTHASE"/>
    <property type="match status" value="1"/>
</dbReference>
<dbReference type="PANTHER" id="PTHR21327">
    <property type="entry name" value="GTP CYCLOHYDROLASE II-RELATED"/>
    <property type="match status" value="1"/>
</dbReference>
<dbReference type="Pfam" id="PF00926">
    <property type="entry name" value="DHBP_synthase"/>
    <property type="match status" value="1"/>
</dbReference>
<dbReference type="SUPFAM" id="SSF55821">
    <property type="entry name" value="YrdC/RibB"/>
    <property type="match status" value="1"/>
</dbReference>
<feature type="chain" id="PRO_1000040641" description="3,4-dihydroxy-2-butanone 4-phosphate synthase">
    <location>
        <begin position="1"/>
        <end position="217"/>
    </location>
</feature>
<feature type="binding site" evidence="1">
    <location>
        <begin position="37"/>
        <end position="38"/>
    </location>
    <ligand>
        <name>D-ribulose 5-phosphate</name>
        <dbReference type="ChEBI" id="CHEBI:58121"/>
    </ligand>
</feature>
<feature type="binding site" evidence="1">
    <location>
        <position position="38"/>
    </location>
    <ligand>
        <name>Mg(2+)</name>
        <dbReference type="ChEBI" id="CHEBI:18420"/>
        <label>1</label>
    </ligand>
</feature>
<feature type="binding site" evidence="1">
    <location>
        <position position="38"/>
    </location>
    <ligand>
        <name>Mg(2+)</name>
        <dbReference type="ChEBI" id="CHEBI:18420"/>
        <label>2</label>
    </ligand>
</feature>
<feature type="binding site" evidence="1">
    <location>
        <position position="42"/>
    </location>
    <ligand>
        <name>D-ribulose 5-phosphate</name>
        <dbReference type="ChEBI" id="CHEBI:58121"/>
    </ligand>
</feature>
<feature type="binding site" evidence="1">
    <location>
        <begin position="150"/>
        <end position="154"/>
    </location>
    <ligand>
        <name>D-ribulose 5-phosphate</name>
        <dbReference type="ChEBI" id="CHEBI:58121"/>
    </ligand>
</feature>
<feature type="binding site" evidence="1">
    <location>
        <position position="153"/>
    </location>
    <ligand>
        <name>Mg(2+)</name>
        <dbReference type="ChEBI" id="CHEBI:18420"/>
        <label>2</label>
    </ligand>
</feature>
<feature type="binding site" evidence="1">
    <location>
        <position position="174"/>
    </location>
    <ligand>
        <name>D-ribulose 5-phosphate</name>
        <dbReference type="ChEBI" id="CHEBI:58121"/>
    </ligand>
</feature>
<feature type="site" description="Essential for catalytic activity" evidence="1">
    <location>
        <position position="136"/>
    </location>
</feature>
<feature type="site" description="Essential for catalytic activity" evidence="1">
    <location>
        <position position="174"/>
    </location>
</feature>
<sequence length="217" mass="23360">MNQTLLSDFGTPVERVERAIDALRNGRGVMVLDDESRENEGDMVFAAEAMTLEQMALTIRHGSGIVCLCITDERRQQLDLPMMVTHNSSQFQTAFTVTIEAAEGVTTGVSAADRLTTIRKAIADNAKPADLNRPGHVFPLRGQPGGVLSRRGHTEASIDLATLAGYKPAGVLCELTNDDGSMAHAPEVIAFAKLHDMPVVTIDDLAAYLQSRAKKAS</sequence>
<protein>
    <recommendedName>
        <fullName evidence="1">3,4-dihydroxy-2-butanone 4-phosphate synthase</fullName>
        <shortName evidence="1">DHBP synthase</shortName>
        <ecNumber evidence="1">4.1.99.12</ecNumber>
    </recommendedName>
</protein>
<gene>
    <name evidence="1" type="primary">ribB</name>
    <name type="ordered locus">YPN_0517</name>
    <name type="ORF">YP516_0538</name>
</gene>
<accession>Q1CMD1</accession>
<accession>C4GP76</accession>
<proteinExistence type="inferred from homology"/>
<keyword id="KW-0456">Lyase</keyword>
<keyword id="KW-0460">Magnesium</keyword>
<keyword id="KW-0464">Manganese</keyword>
<keyword id="KW-0479">Metal-binding</keyword>
<keyword id="KW-0686">Riboflavin biosynthesis</keyword>
<comment type="function">
    <text evidence="1">Catalyzes the conversion of D-ribulose 5-phosphate to formate and 3,4-dihydroxy-2-butanone 4-phosphate.</text>
</comment>
<comment type="catalytic activity">
    <reaction evidence="1">
        <text>D-ribulose 5-phosphate = (2S)-2-hydroxy-3-oxobutyl phosphate + formate + H(+)</text>
        <dbReference type="Rhea" id="RHEA:18457"/>
        <dbReference type="ChEBI" id="CHEBI:15378"/>
        <dbReference type="ChEBI" id="CHEBI:15740"/>
        <dbReference type="ChEBI" id="CHEBI:58121"/>
        <dbReference type="ChEBI" id="CHEBI:58830"/>
        <dbReference type="EC" id="4.1.99.12"/>
    </reaction>
</comment>
<comment type="cofactor">
    <cofactor evidence="1">
        <name>Mg(2+)</name>
        <dbReference type="ChEBI" id="CHEBI:18420"/>
    </cofactor>
    <cofactor evidence="1">
        <name>Mn(2+)</name>
        <dbReference type="ChEBI" id="CHEBI:29035"/>
    </cofactor>
    <text evidence="1">Binds 2 divalent metal cations per subunit. Magnesium or manganese.</text>
</comment>
<comment type="pathway">
    <text evidence="1">Cofactor biosynthesis; riboflavin biosynthesis; 2-hydroxy-3-oxobutyl phosphate from D-ribulose 5-phosphate: step 1/1.</text>
</comment>
<comment type="subunit">
    <text evidence="1">Homodimer.</text>
</comment>
<comment type="similarity">
    <text evidence="1">Belongs to the DHBP synthase family.</text>
</comment>
<reference key="1">
    <citation type="journal article" date="2006" name="J. Bacteriol.">
        <title>Complete genome sequence of Yersinia pestis strains Antiqua and Nepal516: evidence of gene reduction in an emerging pathogen.</title>
        <authorList>
            <person name="Chain P.S.G."/>
            <person name="Hu P."/>
            <person name="Malfatti S.A."/>
            <person name="Radnedge L."/>
            <person name="Larimer F."/>
            <person name="Vergez L.M."/>
            <person name="Worsham P."/>
            <person name="Chu M.C."/>
            <person name="Andersen G.L."/>
        </authorList>
    </citation>
    <scope>NUCLEOTIDE SEQUENCE [LARGE SCALE GENOMIC DNA]</scope>
    <source>
        <strain>Nepal516</strain>
    </source>
</reference>
<reference key="2">
    <citation type="submission" date="2009-04" db="EMBL/GenBank/DDBJ databases">
        <title>Yersinia pestis Nepal516A whole genome shotgun sequencing project.</title>
        <authorList>
            <person name="Plunkett G. III"/>
            <person name="Anderson B.D."/>
            <person name="Baumler D.J."/>
            <person name="Burland V."/>
            <person name="Cabot E.L."/>
            <person name="Glasner J.D."/>
            <person name="Mau B."/>
            <person name="Neeno-Eckwall E."/>
            <person name="Perna N.T."/>
            <person name="Munk A.C."/>
            <person name="Tapia R."/>
            <person name="Green L.D."/>
            <person name="Rogers Y.C."/>
            <person name="Detter J.C."/>
            <person name="Bruce D.C."/>
            <person name="Brettin T.S."/>
        </authorList>
    </citation>
    <scope>NUCLEOTIDE SEQUENCE [LARGE SCALE GENOMIC DNA]</scope>
    <source>
        <strain>Nepal516</strain>
    </source>
</reference>